<protein>
    <recommendedName>
        <fullName>Cytochrome b</fullName>
    </recommendedName>
    <alternativeName>
        <fullName>Complex III subunit 3</fullName>
    </alternativeName>
    <alternativeName>
        <fullName>Complex III subunit III</fullName>
    </alternativeName>
    <alternativeName>
        <fullName>Cytochrome b-c1 complex subunit 3</fullName>
    </alternativeName>
    <alternativeName>
        <fullName>Ubiquinol-cytochrome-c reductase complex cytochrome b subunit</fullName>
    </alternativeName>
</protein>
<dbReference type="EMBL" id="AF147657">
    <property type="protein sequence ID" value="AAL14056.1"/>
    <property type="molecule type" value="Genomic_DNA"/>
</dbReference>
<dbReference type="SMR" id="Q94NM3"/>
<dbReference type="GO" id="GO:0005743">
    <property type="term" value="C:mitochondrial inner membrane"/>
    <property type="evidence" value="ECO:0007669"/>
    <property type="project" value="UniProtKB-SubCell"/>
</dbReference>
<dbReference type="GO" id="GO:0045275">
    <property type="term" value="C:respiratory chain complex III"/>
    <property type="evidence" value="ECO:0007669"/>
    <property type="project" value="InterPro"/>
</dbReference>
<dbReference type="GO" id="GO:0046872">
    <property type="term" value="F:metal ion binding"/>
    <property type="evidence" value="ECO:0007669"/>
    <property type="project" value="UniProtKB-KW"/>
</dbReference>
<dbReference type="GO" id="GO:0008121">
    <property type="term" value="F:ubiquinol-cytochrome-c reductase activity"/>
    <property type="evidence" value="ECO:0007669"/>
    <property type="project" value="InterPro"/>
</dbReference>
<dbReference type="GO" id="GO:0006122">
    <property type="term" value="P:mitochondrial electron transport, ubiquinol to cytochrome c"/>
    <property type="evidence" value="ECO:0007669"/>
    <property type="project" value="TreeGrafter"/>
</dbReference>
<dbReference type="CDD" id="cd00290">
    <property type="entry name" value="cytochrome_b_C"/>
    <property type="match status" value="1"/>
</dbReference>
<dbReference type="CDD" id="cd00284">
    <property type="entry name" value="Cytochrome_b_N"/>
    <property type="match status" value="1"/>
</dbReference>
<dbReference type="FunFam" id="1.20.810.10:FF:000002">
    <property type="entry name" value="Cytochrome b"/>
    <property type="match status" value="1"/>
</dbReference>
<dbReference type="Gene3D" id="1.20.810.10">
    <property type="entry name" value="Cytochrome Bc1 Complex, Chain C"/>
    <property type="match status" value="1"/>
</dbReference>
<dbReference type="InterPro" id="IPR005798">
    <property type="entry name" value="Cyt_b/b6_C"/>
</dbReference>
<dbReference type="InterPro" id="IPR036150">
    <property type="entry name" value="Cyt_b/b6_C_sf"/>
</dbReference>
<dbReference type="InterPro" id="IPR005797">
    <property type="entry name" value="Cyt_b/b6_N"/>
</dbReference>
<dbReference type="InterPro" id="IPR027387">
    <property type="entry name" value="Cytb/b6-like_sf"/>
</dbReference>
<dbReference type="InterPro" id="IPR030689">
    <property type="entry name" value="Cytochrome_b"/>
</dbReference>
<dbReference type="InterPro" id="IPR048260">
    <property type="entry name" value="Cytochrome_b_C_euk/bac"/>
</dbReference>
<dbReference type="InterPro" id="IPR048259">
    <property type="entry name" value="Cytochrome_b_N_euk/bac"/>
</dbReference>
<dbReference type="InterPro" id="IPR016174">
    <property type="entry name" value="Di-haem_cyt_TM"/>
</dbReference>
<dbReference type="PANTHER" id="PTHR19271">
    <property type="entry name" value="CYTOCHROME B"/>
    <property type="match status" value="1"/>
</dbReference>
<dbReference type="PANTHER" id="PTHR19271:SF16">
    <property type="entry name" value="CYTOCHROME B"/>
    <property type="match status" value="1"/>
</dbReference>
<dbReference type="Pfam" id="PF00032">
    <property type="entry name" value="Cytochrom_B_C"/>
    <property type="match status" value="1"/>
</dbReference>
<dbReference type="Pfam" id="PF00033">
    <property type="entry name" value="Cytochrome_B"/>
    <property type="match status" value="1"/>
</dbReference>
<dbReference type="PIRSF" id="PIRSF038885">
    <property type="entry name" value="COB"/>
    <property type="match status" value="1"/>
</dbReference>
<dbReference type="SUPFAM" id="SSF81648">
    <property type="entry name" value="a domain/subunit of cytochrome bc1 complex (Ubiquinol-cytochrome c reductase)"/>
    <property type="match status" value="1"/>
</dbReference>
<dbReference type="SUPFAM" id="SSF81342">
    <property type="entry name" value="Transmembrane di-heme cytochromes"/>
    <property type="match status" value="1"/>
</dbReference>
<dbReference type="PROSITE" id="PS51003">
    <property type="entry name" value="CYTB_CTER"/>
    <property type="match status" value="1"/>
</dbReference>
<dbReference type="PROSITE" id="PS51002">
    <property type="entry name" value="CYTB_NTER"/>
    <property type="match status" value="1"/>
</dbReference>
<keyword id="KW-0249">Electron transport</keyword>
<keyword id="KW-0349">Heme</keyword>
<keyword id="KW-0408">Iron</keyword>
<keyword id="KW-0472">Membrane</keyword>
<keyword id="KW-0479">Metal-binding</keyword>
<keyword id="KW-0496">Mitochondrion</keyword>
<keyword id="KW-0999">Mitochondrion inner membrane</keyword>
<keyword id="KW-0679">Respiratory chain</keyword>
<keyword id="KW-0812">Transmembrane</keyword>
<keyword id="KW-1133">Transmembrane helix</keyword>
<keyword id="KW-0813">Transport</keyword>
<keyword id="KW-0830">Ubiquinone</keyword>
<reference key="1">
    <citation type="journal article" date="2001" name="Mol. Phylogenet. Evol.">
        <title>Molecular phylogeny of the chipmunks inferred from mitochondrial cytochrome b and cytochrome oxidase II gene sequences.</title>
        <authorList>
            <person name="Piaggio A.J."/>
            <person name="Spicer G.S."/>
        </authorList>
    </citation>
    <scope>NUCLEOTIDE SEQUENCE [GENOMIC DNA]</scope>
</reference>
<proteinExistence type="inferred from homology"/>
<sequence length="379" mass="43068">MTNIRKTHPLIKIINHSFIDLPAPSNISAWWNFGSLLGICLIIQILTGLFLAMHYTSDTMTAFSSVTHICRDVNYGWLIRYMHANGASMFFICLFLHVGRGLYYGSYTYFETWNIGVILLFAVMATAFMGYVLPWGQMSFWGATVITNLLSAIPYIGTTLVEWIWGGFSVDKATLTRFFAFHFILPFIITALVMVHLLFLHETGSNNPSGLISDSDKIPFHPYYTIKDILGILLLILVLMILVLFSPDLLGDPDNYTPANPLSTPPHIKPEWYFLFAYAILRSIPNKLGGVLALVLSILILMLFPILHMSKQRSMMFRPLSQCMFWILVADLFTLTWIGGQPVEYPFIIIGQLASILYFMIILLILPAISLFENKLLKW</sequence>
<organism>
    <name type="scientific">Tamias quadrimaculatus</name>
    <name type="common">Long-eared chipmunk</name>
    <name type="synonym">Neotamias quadrimaculatus</name>
    <dbReference type="NCBI Taxonomy" id="123791"/>
    <lineage>
        <taxon>Eukaryota</taxon>
        <taxon>Metazoa</taxon>
        <taxon>Chordata</taxon>
        <taxon>Craniata</taxon>
        <taxon>Vertebrata</taxon>
        <taxon>Euteleostomi</taxon>
        <taxon>Mammalia</taxon>
        <taxon>Eutheria</taxon>
        <taxon>Euarchontoglires</taxon>
        <taxon>Glires</taxon>
        <taxon>Rodentia</taxon>
        <taxon>Sciuromorpha</taxon>
        <taxon>Sciuridae</taxon>
        <taxon>Xerinae</taxon>
        <taxon>Marmotini</taxon>
        <taxon>Tamias</taxon>
    </lineage>
</organism>
<feature type="chain" id="PRO_0000257949" description="Cytochrome b">
    <location>
        <begin position="1"/>
        <end position="379"/>
    </location>
</feature>
<feature type="transmembrane region" description="Helical" evidence="2">
    <location>
        <begin position="33"/>
        <end position="53"/>
    </location>
</feature>
<feature type="transmembrane region" description="Helical" evidence="2">
    <location>
        <begin position="77"/>
        <end position="98"/>
    </location>
</feature>
<feature type="transmembrane region" description="Helical" evidence="2">
    <location>
        <begin position="113"/>
        <end position="133"/>
    </location>
</feature>
<feature type="transmembrane region" description="Helical" evidence="2">
    <location>
        <begin position="178"/>
        <end position="198"/>
    </location>
</feature>
<feature type="transmembrane region" description="Helical" evidence="2">
    <location>
        <begin position="226"/>
        <end position="246"/>
    </location>
</feature>
<feature type="transmembrane region" description="Helical" evidence="2">
    <location>
        <begin position="288"/>
        <end position="308"/>
    </location>
</feature>
<feature type="transmembrane region" description="Helical" evidence="2">
    <location>
        <begin position="320"/>
        <end position="340"/>
    </location>
</feature>
<feature type="transmembrane region" description="Helical" evidence="2">
    <location>
        <begin position="347"/>
        <end position="367"/>
    </location>
</feature>
<feature type="binding site" description="axial binding residue" evidence="2">
    <location>
        <position position="83"/>
    </location>
    <ligand>
        <name>heme b</name>
        <dbReference type="ChEBI" id="CHEBI:60344"/>
        <label>b562</label>
    </ligand>
    <ligandPart>
        <name>Fe</name>
        <dbReference type="ChEBI" id="CHEBI:18248"/>
    </ligandPart>
</feature>
<feature type="binding site" description="axial binding residue" evidence="2">
    <location>
        <position position="97"/>
    </location>
    <ligand>
        <name>heme b</name>
        <dbReference type="ChEBI" id="CHEBI:60344"/>
        <label>b566</label>
    </ligand>
    <ligandPart>
        <name>Fe</name>
        <dbReference type="ChEBI" id="CHEBI:18248"/>
    </ligandPart>
</feature>
<feature type="binding site" description="axial binding residue" evidence="2">
    <location>
        <position position="182"/>
    </location>
    <ligand>
        <name>heme b</name>
        <dbReference type="ChEBI" id="CHEBI:60344"/>
        <label>b562</label>
    </ligand>
    <ligandPart>
        <name>Fe</name>
        <dbReference type="ChEBI" id="CHEBI:18248"/>
    </ligandPart>
</feature>
<feature type="binding site" description="axial binding residue" evidence="2">
    <location>
        <position position="196"/>
    </location>
    <ligand>
        <name>heme b</name>
        <dbReference type="ChEBI" id="CHEBI:60344"/>
        <label>b566</label>
    </ligand>
    <ligandPart>
        <name>Fe</name>
        <dbReference type="ChEBI" id="CHEBI:18248"/>
    </ligandPart>
</feature>
<feature type="binding site" evidence="2">
    <location>
        <position position="201"/>
    </location>
    <ligand>
        <name>a ubiquinone</name>
        <dbReference type="ChEBI" id="CHEBI:16389"/>
    </ligand>
</feature>
<accession>Q94NM3</accession>
<comment type="function">
    <text evidence="2">Component of the ubiquinol-cytochrome c reductase complex (complex III or cytochrome b-c1 complex) that is part of the mitochondrial respiratory chain. The b-c1 complex mediates electron transfer from ubiquinol to cytochrome c. Contributes to the generation of a proton gradient across the mitochondrial membrane that is then used for ATP synthesis.</text>
</comment>
<comment type="cofactor">
    <cofactor evidence="2">
        <name>heme b</name>
        <dbReference type="ChEBI" id="CHEBI:60344"/>
    </cofactor>
    <text evidence="2">Binds 2 heme b groups non-covalently.</text>
</comment>
<comment type="subunit">
    <text evidence="2">The cytochrome bc1 complex contains 11 subunits: 3 respiratory subunits (MT-CYB, CYC1 and UQCRFS1), 2 core proteins (UQCRC1 and UQCRC2) and 6 low-molecular weight proteins (UQCRH/QCR6, UQCRB/QCR7, UQCRQ/QCR8, UQCR10/QCR9, UQCR11/QCR10 and a cleavage product of UQCRFS1). This cytochrome bc1 complex then forms a dimer.</text>
</comment>
<comment type="subcellular location">
    <subcellularLocation>
        <location evidence="2">Mitochondrion inner membrane</location>
        <topology evidence="2">Multi-pass membrane protein</topology>
    </subcellularLocation>
</comment>
<comment type="miscellaneous">
    <text evidence="1">Heme 1 (or BL or b562) is low-potential and absorbs at about 562 nm, and heme 2 (or BH or b566) is high-potential and absorbs at about 566 nm.</text>
</comment>
<comment type="similarity">
    <text evidence="3 4">Belongs to the cytochrome b family.</text>
</comment>
<comment type="caution">
    <text evidence="2">The full-length protein contains only eight transmembrane helices, not nine as predicted by bioinformatics tools.</text>
</comment>
<name>CYB_TAMQA</name>
<gene>
    <name type="primary">MT-CYB</name>
    <name type="synonym">COB</name>
    <name type="synonym">CYTB</name>
    <name type="synonym">MTCYB</name>
</gene>
<evidence type="ECO:0000250" key="1"/>
<evidence type="ECO:0000250" key="2">
    <source>
        <dbReference type="UniProtKB" id="P00157"/>
    </source>
</evidence>
<evidence type="ECO:0000255" key="3">
    <source>
        <dbReference type="PROSITE-ProRule" id="PRU00967"/>
    </source>
</evidence>
<evidence type="ECO:0000255" key="4">
    <source>
        <dbReference type="PROSITE-ProRule" id="PRU00968"/>
    </source>
</evidence>
<geneLocation type="mitochondrion"/>